<name>DENR_NEOFI</name>
<comment type="subunit">
    <text evidence="1">Interacts with the 40S ribosomal subunit.</text>
</comment>
<comment type="subcellular location">
    <subcellularLocation>
        <location evidence="1">Cytoplasm</location>
    </subcellularLocation>
</comment>
<comment type="domain">
    <text>The SUI1 domain may be involved in RNA binding.</text>
</comment>
<comment type="similarity">
    <text evidence="3">Belongs to the DENR family.</text>
</comment>
<keyword id="KW-0963">Cytoplasm</keyword>
<keyword id="KW-1185">Reference proteome</keyword>
<keyword id="KW-0687">Ribonucleoprotein</keyword>
<keyword id="KW-0689">Ribosomal protein</keyword>
<reference key="1">
    <citation type="journal article" date="2008" name="PLoS Genet.">
        <title>Genomic islands in the pathogenic filamentous fungus Aspergillus fumigatus.</title>
        <authorList>
            <person name="Fedorova N.D."/>
            <person name="Khaldi N."/>
            <person name="Joardar V.S."/>
            <person name="Maiti R."/>
            <person name="Amedeo P."/>
            <person name="Anderson M.J."/>
            <person name="Crabtree J."/>
            <person name="Silva J.C."/>
            <person name="Badger J.H."/>
            <person name="Albarraq A."/>
            <person name="Angiuoli S."/>
            <person name="Bussey H."/>
            <person name="Bowyer P."/>
            <person name="Cotty P.J."/>
            <person name="Dyer P.S."/>
            <person name="Egan A."/>
            <person name="Galens K."/>
            <person name="Fraser-Liggett C.M."/>
            <person name="Haas B.J."/>
            <person name="Inman J.M."/>
            <person name="Kent R."/>
            <person name="Lemieux S."/>
            <person name="Malavazi I."/>
            <person name="Orvis J."/>
            <person name="Roemer T."/>
            <person name="Ronning C.M."/>
            <person name="Sundaram J.P."/>
            <person name="Sutton G."/>
            <person name="Turner G."/>
            <person name="Venter J.C."/>
            <person name="White O.R."/>
            <person name="Whitty B.R."/>
            <person name="Youngman P."/>
            <person name="Wolfe K.H."/>
            <person name="Goldman G.H."/>
            <person name="Wortman J.R."/>
            <person name="Jiang B."/>
            <person name="Denning D.W."/>
            <person name="Nierman W.C."/>
        </authorList>
    </citation>
    <scope>NUCLEOTIDE SEQUENCE [LARGE SCALE GENOMIC DNA]</scope>
    <source>
        <strain>ATCC 1020 / DSM 3700 / CBS 544.65 / FGSC A1164 / JCM 1740 / NRRL 181 / WB 181</strain>
    </source>
</reference>
<dbReference type="EMBL" id="DS027694">
    <property type="protein sequence ID" value="EAW20021.1"/>
    <property type="molecule type" value="Genomic_DNA"/>
</dbReference>
<dbReference type="RefSeq" id="XP_001261918.1">
    <property type="nucleotide sequence ID" value="XM_001261917.1"/>
</dbReference>
<dbReference type="SMR" id="A1DAY1"/>
<dbReference type="STRING" id="331117.A1DAY1"/>
<dbReference type="EnsemblFungi" id="EAW20021">
    <property type="protein sequence ID" value="EAW20021"/>
    <property type="gene ID" value="NFIA_096430"/>
</dbReference>
<dbReference type="GeneID" id="4588802"/>
<dbReference type="KEGG" id="nfi:NFIA_096430"/>
<dbReference type="VEuPathDB" id="FungiDB:NFIA_096430"/>
<dbReference type="eggNOG" id="KOG3239">
    <property type="taxonomic scope" value="Eukaryota"/>
</dbReference>
<dbReference type="HOGENOM" id="CLU_073511_0_1_1"/>
<dbReference type="OMA" id="EVFEIDM"/>
<dbReference type="OrthoDB" id="277199at2759"/>
<dbReference type="Proteomes" id="UP000006702">
    <property type="component" value="Unassembled WGS sequence"/>
</dbReference>
<dbReference type="GO" id="GO:0005737">
    <property type="term" value="C:cytoplasm"/>
    <property type="evidence" value="ECO:0007669"/>
    <property type="project" value="UniProtKB-SubCell"/>
</dbReference>
<dbReference type="GO" id="GO:1990904">
    <property type="term" value="C:ribonucleoprotein complex"/>
    <property type="evidence" value="ECO:0007669"/>
    <property type="project" value="UniProtKB-KW"/>
</dbReference>
<dbReference type="GO" id="GO:0005840">
    <property type="term" value="C:ribosome"/>
    <property type="evidence" value="ECO:0007669"/>
    <property type="project" value="UniProtKB-KW"/>
</dbReference>
<dbReference type="GO" id="GO:0003729">
    <property type="term" value="F:mRNA binding"/>
    <property type="evidence" value="ECO:0007669"/>
    <property type="project" value="TreeGrafter"/>
</dbReference>
<dbReference type="GO" id="GO:0003743">
    <property type="term" value="F:translation initiation factor activity"/>
    <property type="evidence" value="ECO:0007669"/>
    <property type="project" value="InterPro"/>
</dbReference>
<dbReference type="GO" id="GO:0001731">
    <property type="term" value="P:formation of translation preinitiation complex"/>
    <property type="evidence" value="ECO:0007669"/>
    <property type="project" value="TreeGrafter"/>
</dbReference>
<dbReference type="GO" id="GO:0000184">
    <property type="term" value="P:nuclear-transcribed mRNA catabolic process, nonsense-mediated decay"/>
    <property type="evidence" value="ECO:0007669"/>
    <property type="project" value="EnsemblFungi"/>
</dbReference>
<dbReference type="GO" id="GO:0032790">
    <property type="term" value="P:ribosome disassembly"/>
    <property type="evidence" value="ECO:0007669"/>
    <property type="project" value="EnsemblFungi"/>
</dbReference>
<dbReference type="GO" id="GO:0002188">
    <property type="term" value="P:translation reinitiation"/>
    <property type="evidence" value="ECO:0007669"/>
    <property type="project" value="TreeGrafter"/>
</dbReference>
<dbReference type="CDD" id="cd11607">
    <property type="entry name" value="DENR_C"/>
    <property type="match status" value="1"/>
</dbReference>
<dbReference type="FunFam" id="3.30.780.10:FF:000014">
    <property type="entry name" value="Translation machinery-associated protein 22"/>
    <property type="match status" value="1"/>
</dbReference>
<dbReference type="Gene3D" id="3.30.780.10">
    <property type="entry name" value="SUI1-like domain"/>
    <property type="match status" value="1"/>
</dbReference>
<dbReference type="InterPro" id="IPR050318">
    <property type="entry name" value="DENR/SUI1_TIF"/>
</dbReference>
<dbReference type="InterPro" id="IPR046447">
    <property type="entry name" value="DENR_C"/>
</dbReference>
<dbReference type="InterPro" id="IPR005873">
    <property type="entry name" value="DENR_eukaryotes"/>
</dbReference>
<dbReference type="InterPro" id="IPR048517">
    <property type="entry name" value="DENR_N"/>
</dbReference>
<dbReference type="InterPro" id="IPR001950">
    <property type="entry name" value="SUI1"/>
</dbReference>
<dbReference type="InterPro" id="IPR036877">
    <property type="entry name" value="SUI1_dom_sf"/>
</dbReference>
<dbReference type="NCBIfam" id="TIGR01159">
    <property type="entry name" value="DRP1"/>
    <property type="match status" value="1"/>
</dbReference>
<dbReference type="PANTHER" id="PTHR12789:SF0">
    <property type="entry name" value="DENSITY-REGULATED PROTEIN"/>
    <property type="match status" value="1"/>
</dbReference>
<dbReference type="PANTHER" id="PTHR12789">
    <property type="entry name" value="DENSITY-REGULATED PROTEIN HOMOLOG"/>
    <property type="match status" value="1"/>
</dbReference>
<dbReference type="Pfam" id="PF21023">
    <property type="entry name" value="DENR_N"/>
    <property type="match status" value="1"/>
</dbReference>
<dbReference type="Pfam" id="PF01253">
    <property type="entry name" value="SUI1"/>
    <property type="match status" value="1"/>
</dbReference>
<dbReference type="SUPFAM" id="SSF55159">
    <property type="entry name" value="eIF1-like"/>
    <property type="match status" value="1"/>
</dbReference>
<dbReference type="PROSITE" id="PS50296">
    <property type="entry name" value="SUI1"/>
    <property type="match status" value="1"/>
</dbReference>
<protein>
    <recommendedName>
        <fullName>Translation machinery-associated protein 22</fullName>
    </recommendedName>
</protein>
<gene>
    <name type="primary">tma22</name>
    <name type="ORF">NFIA_096430</name>
</gene>
<accession>A1DAY1</accession>
<proteinExistence type="inferred from homology"/>
<sequence length="194" mass="21289">MAEVAQNSPAEVQAKQVVYCGVCTLPPEYCEFGGTAKKCEEWLKDNHADLYQRLYSEEALSSNLSELSVSVRERAAKDAAKKEAKAAAAEARDAERKAAAKVQIKRVERNKRKHVTVITGLEVHGLENKKVAKELGKKFATGSSVTKSPAGVEEITVQGDVSEDVQEWLLELYGKEIPESNIELVEDKKKKASG</sequence>
<organism>
    <name type="scientific">Neosartorya fischeri (strain ATCC 1020 / DSM 3700 / CBS 544.65 / FGSC A1164 / JCM 1740 / NRRL 181 / WB 181)</name>
    <name type="common">Aspergillus fischerianus</name>
    <dbReference type="NCBI Taxonomy" id="331117"/>
    <lineage>
        <taxon>Eukaryota</taxon>
        <taxon>Fungi</taxon>
        <taxon>Dikarya</taxon>
        <taxon>Ascomycota</taxon>
        <taxon>Pezizomycotina</taxon>
        <taxon>Eurotiomycetes</taxon>
        <taxon>Eurotiomycetidae</taxon>
        <taxon>Eurotiales</taxon>
        <taxon>Aspergillaceae</taxon>
        <taxon>Aspergillus</taxon>
        <taxon>Aspergillus subgen. Fumigati</taxon>
    </lineage>
</organism>
<feature type="chain" id="PRO_0000320446" description="Translation machinery-associated protein 22">
    <location>
        <begin position="1"/>
        <end position="194"/>
    </location>
</feature>
<feature type="domain" description="SUI1" evidence="2">
    <location>
        <begin position="102"/>
        <end position="173"/>
    </location>
</feature>
<evidence type="ECO:0000250" key="1"/>
<evidence type="ECO:0000255" key="2">
    <source>
        <dbReference type="PROSITE-ProRule" id="PRU00200"/>
    </source>
</evidence>
<evidence type="ECO:0000305" key="3"/>